<name>TYSY_MYCTO</name>
<sequence>MSIVTPYEDLLRFVLETGTPKSDRTGTGTRSLFGQQMRYDLSAGFPLLTTKKVHFKSVAYELLWFLRGDSNIGWLHEHGVTIWDEWASDTGELGPIYGVQWRSWPAPSGEHIDQISAALDLLRTDPDSRRIIVSAWNVGEIERMALPPCHAFFQFYVADGRLSCQLYQRSADLFLGVPFNIASYALLTHMMAAQAGLSVGEFIWTGGDCHIYDNHVEQVRLQLSREPRPYPKLLLADRDSIFEYTYEDIVVKNYDPHPAIKAPVAV</sequence>
<feature type="chain" id="PRO_0000428489" description="Thymidylate synthase">
    <location>
        <begin position="1"/>
        <end position="266"/>
    </location>
</feature>
<feature type="active site" description="Nucleophile" evidence="1">
    <location>
        <position position="149"/>
    </location>
</feature>
<feature type="binding site" description="in other chain" evidence="1">
    <location>
        <position position="24"/>
    </location>
    <ligand>
        <name>dUMP</name>
        <dbReference type="ChEBI" id="CHEBI:246422"/>
        <note>ligand shared between dimeric partners</note>
    </ligand>
</feature>
<feature type="binding site" evidence="1">
    <location>
        <position position="54"/>
    </location>
    <ligand>
        <name>(6R)-5,10-methylene-5,6,7,8-tetrahydrofolate</name>
        <dbReference type="ChEBI" id="CHEBI:15636"/>
    </ligand>
</feature>
<feature type="binding site" evidence="1">
    <location>
        <begin position="129"/>
        <end position="130"/>
    </location>
    <ligand>
        <name>dUMP</name>
        <dbReference type="ChEBI" id="CHEBI:246422"/>
        <note>ligand shared between dimeric partners</note>
    </ligand>
</feature>
<feature type="binding site" description="in other chain" evidence="1">
    <location>
        <begin position="169"/>
        <end position="172"/>
    </location>
    <ligand>
        <name>dUMP</name>
        <dbReference type="ChEBI" id="CHEBI:246422"/>
        <note>ligand shared between dimeric partners</note>
    </ligand>
</feature>
<feature type="binding site" evidence="1">
    <location>
        <position position="172"/>
    </location>
    <ligand>
        <name>(6R)-5,10-methylene-5,6,7,8-tetrahydrofolate</name>
        <dbReference type="ChEBI" id="CHEBI:15636"/>
    </ligand>
</feature>
<feature type="binding site" description="in other chain" evidence="1">
    <location>
        <position position="180"/>
    </location>
    <ligand>
        <name>dUMP</name>
        <dbReference type="ChEBI" id="CHEBI:246422"/>
        <note>ligand shared between dimeric partners</note>
    </ligand>
</feature>
<feature type="binding site" description="in other chain" evidence="1">
    <location>
        <begin position="210"/>
        <end position="212"/>
    </location>
    <ligand>
        <name>dUMP</name>
        <dbReference type="ChEBI" id="CHEBI:246422"/>
        <note>ligand shared between dimeric partners</note>
    </ligand>
</feature>
<feature type="binding site" evidence="1">
    <location>
        <position position="265"/>
    </location>
    <ligand>
        <name>(6R)-5,10-methylene-5,6,7,8-tetrahydrofolate</name>
        <dbReference type="ChEBI" id="CHEBI:15636"/>
    </ligand>
</feature>
<gene>
    <name evidence="1" type="primary">thyA</name>
    <name type="ordered locus">MT2834</name>
</gene>
<keyword id="KW-0963">Cytoplasm</keyword>
<keyword id="KW-0489">Methyltransferase</keyword>
<keyword id="KW-0545">Nucleotide biosynthesis</keyword>
<keyword id="KW-1185">Reference proteome</keyword>
<keyword id="KW-0808">Transferase</keyword>
<reference key="1">
    <citation type="journal article" date="2002" name="J. Bacteriol.">
        <title>Whole-genome comparison of Mycobacterium tuberculosis clinical and laboratory strains.</title>
        <authorList>
            <person name="Fleischmann R.D."/>
            <person name="Alland D."/>
            <person name="Eisen J.A."/>
            <person name="Carpenter L."/>
            <person name="White O."/>
            <person name="Peterson J.D."/>
            <person name="DeBoy R.T."/>
            <person name="Dodson R.J."/>
            <person name="Gwinn M.L."/>
            <person name="Haft D.H."/>
            <person name="Hickey E.K."/>
            <person name="Kolonay J.F."/>
            <person name="Nelson W.C."/>
            <person name="Umayam L.A."/>
            <person name="Ermolaeva M.D."/>
            <person name="Salzberg S.L."/>
            <person name="Delcher A."/>
            <person name="Utterback T.R."/>
            <person name="Weidman J.F."/>
            <person name="Khouri H.M."/>
            <person name="Gill J."/>
            <person name="Mikula A."/>
            <person name="Bishai W."/>
            <person name="Jacobs W.R. Jr."/>
            <person name="Venter J.C."/>
            <person name="Fraser C.M."/>
        </authorList>
    </citation>
    <scope>NUCLEOTIDE SEQUENCE [LARGE SCALE GENOMIC DNA]</scope>
    <source>
        <strain>CDC 1551 / Oshkosh</strain>
    </source>
</reference>
<organism>
    <name type="scientific">Mycobacterium tuberculosis (strain CDC 1551 / Oshkosh)</name>
    <dbReference type="NCBI Taxonomy" id="83331"/>
    <lineage>
        <taxon>Bacteria</taxon>
        <taxon>Bacillati</taxon>
        <taxon>Actinomycetota</taxon>
        <taxon>Actinomycetes</taxon>
        <taxon>Mycobacteriales</taxon>
        <taxon>Mycobacteriaceae</taxon>
        <taxon>Mycobacterium</taxon>
        <taxon>Mycobacterium tuberculosis complex</taxon>
    </lineage>
</organism>
<comment type="function">
    <text evidence="1">Catalyzes the reductive methylation of 2'-deoxyuridine-5'-monophosphate (dUMP) to 2'-deoxythymidine-5'-monophosphate (dTMP) while utilizing 5,10-methylenetetrahydrofolate (mTHF) as the methyl donor and reductant in the reaction, yielding dihydrofolate (DHF) as a by-product. This enzymatic reaction provides an intracellular de novo source of dTMP, an essential precursor for DNA biosynthesis.</text>
</comment>
<comment type="catalytic activity">
    <reaction evidence="1">
        <text>dUMP + (6R)-5,10-methylene-5,6,7,8-tetrahydrofolate = 7,8-dihydrofolate + dTMP</text>
        <dbReference type="Rhea" id="RHEA:12104"/>
        <dbReference type="ChEBI" id="CHEBI:15636"/>
        <dbReference type="ChEBI" id="CHEBI:57451"/>
        <dbReference type="ChEBI" id="CHEBI:63528"/>
        <dbReference type="ChEBI" id="CHEBI:246422"/>
        <dbReference type="EC" id="2.1.1.45"/>
    </reaction>
</comment>
<comment type="pathway">
    <text evidence="1">Pyrimidine metabolism; dTTP biosynthesis.</text>
</comment>
<comment type="subunit">
    <text evidence="1">Homodimer.</text>
</comment>
<comment type="subcellular location">
    <subcellularLocation>
        <location evidence="1">Cytoplasm</location>
    </subcellularLocation>
</comment>
<comment type="similarity">
    <text evidence="1">Belongs to the thymidylate synthase family. Bacterial-type ThyA subfamily.</text>
</comment>
<protein>
    <recommendedName>
        <fullName evidence="1">Thymidylate synthase</fullName>
        <shortName evidence="1">TS</shortName>
        <shortName evidence="1">TSase</shortName>
        <ecNumber evidence="1">2.1.1.45</ecNumber>
    </recommendedName>
</protein>
<proteinExistence type="inferred from homology"/>
<evidence type="ECO:0000255" key="1">
    <source>
        <dbReference type="HAMAP-Rule" id="MF_00008"/>
    </source>
</evidence>
<dbReference type="EC" id="2.1.1.45" evidence="1"/>
<dbReference type="EMBL" id="AE000516">
    <property type="protein sequence ID" value="AAK47153.1"/>
    <property type="molecule type" value="Genomic_DNA"/>
</dbReference>
<dbReference type="PIR" id="C70881">
    <property type="entry name" value="C70881"/>
</dbReference>
<dbReference type="RefSeq" id="WP_003911953.1">
    <property type="nucleotide sequence ID" value="NZ_KK341227.1"/>
</dbReference>
<dbReference type="SMR" id="P9WFR8"/>
<dbReference type="KEGG" id="mtc:MT2834"/>
<dbReference type="PATRIC" id="fig|83331.31.peg.3055"/>
<dbReference type="HOGENOM" id="CLU_021669_0_0_11"/>
<dbReference type="UniPathway" id="UPA00575"/>
<dbReference type="Proteomes" id="UP000001020">
    <property type="component" value="Chromosome"/>
</dbReference>
<dbReference type="GO" id="GO:0005829">
    <property type="term" value="C:cytosol"/>
    <property type="evidence" value="ECO:0007669"/>
    <property type="project" value="TreeGrafter"/>
</dbReference>
<dbReference type="GO" id="GO:0004799">
    <property type="term" value="F:thymidylate synthase activity"/>
    <property type="evidence" value="ECO:0007669"/>
    <property type="project" value="UniProtKB-UniRule"/>
</dbReference>
<dbReference type="GO" id="GO:0006231">
    <property type="term" value="P:dTMP biosynthetic process"/>
    <property type="evidence" value="ECO:0007669"/>
    <property type="project" value="UniProtKB-UniRule"/>
</dbReference>
<dbReference type="GO" id="GO:0006235">
    <property type="term" value="P:dTTP biosynthetic process"/>
    <property type="evidence" value="ECO:0007669"/>
    <property type="project" value="UniProtKB-UniRule"/>
</dbReference>
<dbReference type="GO" id="GO:0032259">
    <property type="term" value="P:methylation"/>
    <property type="evidence" value="ECO:0007669"/>
    <property type="project" value="UniProtKB-KW"/>
</dbReference>
<dbReference type="CDD" id="cd00351">
    <property type="entry name" value="TS_Pyrimidine_HMase"/>
    <property type="match status" value="1"/>
</dbReference>
<dbReference type="FunFam" id="3.30.572.10:FF:000001">
    <property type="entry name" value="Thymidylate synthase"/>
    <property type="match status" value="1"/>
</dbReference>
<dbReference type="Gene3D" id="3.30.572.10">
    <property type="entry name" value="Thymidylate synthase/dCMP hydroxymethylase domain"/>
    <property type="match status" value="1"/>
</dbReference>
<dbReference type="HAMAP" id="MF_00008">
    <property type="entry name" value="Thymidy_synth_bact"/>
    <property type="match status" value="1"/>
</dbReference>
<dbReference type="InterPro" id="IPR045097">
    <property type="entry name" value="Thymidate_synth/dCMP_Mease"/>
</dbReference>
<dbReference type="InterPro" id="IPR023451">
    <property type="entry name" value="Thymidate_synth/dCMP_Mease_dom"/>
</dbReference>
<dbReference type="InterPro" id="IPR036926">
    <property type="entry name" value="Thymidate_synth/dCMP_Mease_sf"/>
</dbReference>
<dbReference type="InterPro" id="IPR000398">
    <property type="entry name" value="Thymidylate_synthase"/>
</dbReference>
<dbReference type="InterPro" id="IPR020940">
    <property type="entry name" value="Thymidylate_synthase_AS"/>
</dbReference>
<dbReference type="NCBIfam" id="NF002497">
    <property type="entry name" value="PRK01827.1-3"/>
    <property type="match status" value="1"/>
</dbReference>
<dbReference type="NCBIfam" id="NF002499">
    <property type="entry name" value="PRK01827.1-5"/>
    <property type="match status" value="1"/>
</dbReference>
<dbReference type="NCBIfam" id="TIGR03284">
    <property type="entry name" value="thym_sym"/>
    <property type="match status" value="2"/>
</dbReference>
<dbReference type="PANTHER" id="PTHR11548:SF9">
    <property type="entry name" value="THYMIDYLATE SYNTHASE"/>
    <property type="match status" value="1"/>
</dbReference>
<dbReference type="PANTHER" id="PTHR11548">
    <property type="entry name" value="THYMIDYLATE SYNTHASE 1"/>
    <property type="match status" value="1"/>
</dbReference>
<dbReference type="Pfam" id="PF00303">
    <property type="entry name" value="Thymidylat_synt"/>
    <property type="match status" value="1"/>
</dbReference>
<dbReference type="PRINTS" id="PR00108">
    <property type="entry name" value="THYMDSNTHASE"/>
</dbReference>
<dbReference type="SUPFAM" id="SSF55831">
    <property type="entry name" value="Thymidylate synthase/dCMP hydroxymethylase"/>
    <property type="match status" value="1"/>
</dbReference>
<dbReference type="PROSITE" id="PS00091">
    <property type="entry name" value="THYMIDYLATE_SYNTHASE"/>
    <property type="match status" value="1"/>
</dbReference>
<accession>P9WFR8</accession>
<accession>L0TD99</accession>
<accession>O33306</accession>
<accession>P67044</accession>